<comment type="function">
    <text evidence="2">Transcriptional activator involved in the development of insulin-producting beta cells in the endocrine pancreas (By similarity). May also be involved in specifying diencephalic neuromeric boundaries, and in controlling the expression of genes that play a role in axonal guidance. Binds to elements within the NEUROD1 promoter (By similarity).</text>
</comment>
<comment type="subunit">
    <text evidence="1">Interacts with OLIG2.</text>
</comment>
<comment type="subcellular location">
    <subcellularLocation>
        <location evidence="2 3">Nucleus</location>
    </subcellularLocation>
</comment>
<comment type="domain">
    <text evidence="1">The homeodomain is essential for interaction with OLIG2.</text>
</comment>
<comment type="similarity">
    <text evidence="5">Belongs to the NK-2 homeobox family.</text>
</comment>
<feature type="chain" id="PRO_0000048930" description="Homeobox protein Nkx-2.2">
    <location>
        <begin position="1"/>
        <end position="273"/>
    </location>
</feature>
<feature type="DNA-binding region" description="Homeobox" evidence="3">
    <location>
        <begin position="128"/>
        <end position="187"/>
    </location>
</feature>
<feature type="region of interest" description="Disordered" evidence="4">
    <location>
        <begin position="1"/>
        <end position="56"/>
    </location>
</feature>
<feature type="region of interest" description="Disordered" evidence="4">
    <location>
        <begin position="91"/>
        <end position="131"/>
    </location>
</feature>
<feature type="compositionally biased region" description="Acidic residues" evidence="4">
    <location>
        <begin position="20"/>
        <end position="38"/>
    </location>
</feature>
<evidence type="ECO:0000250" key="1"/>
<evidence type="ECO:0000250" key="2">
    <source>
        <dbReference type="UniProtKB" id="P42586"/>
    </source>
</evidence>
<evidence type="ECO:0000255" key="3">
    <source>
        <dbReference type="PROSITE-ProRule" id="PRU00108"/>
    </source>
</evidence>
<evidence type="ECO:0000256" key="4">
    <source>
        <dbReference type="SAM" id="MobiDB-lite"/>
    </source>
</evidence>
<evidence type="ECO:0000305" key="5"/>
<reference key="1">
    <citation type="journal article" date="1994" name="Proc. Natl. Acad. Sci. U.S.A.">
        <title>Pancreatic beta cells express a diverse set of homeobox genes.</title>
        <authorList>
            <person name="Rudnick A."/>
            <person name="Ling T.Y."/>
            <person name="Odagiri H."/>
            <person name="Rutter W.J."/>
            <person name="German M.S."/>
        </authorList>
    </citation>
    <scope>NUCLEOTIDE SEQUENCE [MRNA]</scope>
    <source>
        <tissue>Pancreatic islet</tissue>
    </source>
</reference>
<protein>
    <recommendedName>
        <fullName>Homeobox protein Nkx-2.2</fullName>
    </recommendedName>
    <alternativeName>
        <fullName>Homeobox protein NK-2 homolog B</fullName>
    </alternativeName>
</protein>
<name>NKX22_MESAU</name>
<keyword id="KW-0010">Activator</keyword>
<keyword id="KW-0217">Developmental protein</keyword>
<keyword id="KW-0238">DNA-binding</keyword>
<keyword id="KW-0371">Homeobox</keyword>
<keyword id="KW-0539">Nucleus</keyword>
<keyword id="KW-1185">Reference proteome</keyword>
<keyword id="KW-0804">Transcription</keyword>
<keyword id="KW-0805">Transcription regulation</keyword>
<dbReference type="EMBL" id="X81408">
    <property type="protein sequence ID" value="CAA57165.1"/>
    <property type="molecule type" value="mRNA"/>
</dbReference>
<dbReference type="PIR" id="I48187">
    <property type="entry name" value="I48187"/>
</dbReference>
<dbReference type="RefSeq" id="NP_001297481.1">
    <property type="nucleotide sequence ID" value="NM_001310552.1"/>
</dbReference>
<dbReference type="SMR" id="P43697"/>
<dbReference type="STRING" id="10036.ENSMAUP00000003773"/>
<dbReference type="GeneID" id="101837061"/>
<dbReference type="KEGG" id="maua:101837061"/>
<dbReference type="CTD" id="4821"/>
<dbReference type="eggNOG" id="KOG0842">
    <property type="taxonomic scope" value="Eukaryota"/>
</dbReference>
<dbReference type="OrthoDB" id="6159439at2759"/>
<dbReference type="Proteomes" id="UP000189706">
    <property type="component" value="Unplaced"/>
</dbReference>
<dbReference type="GO" id="GO:0005634">
    <property type="term" value="C:nucleus"/>
    <property type="evidence" value="ECO:0007669"/>
    <property type="project" value="UniProtKB-SubCell"/>
</dbReference>
<dbReference type="GO" id="GO:0000987">
    <property type="term" value="F:cis-regulatory region sequence-specific DNA binding"/>
    <property type="evidence" value="ECO:0000250"/>
    <property type="project" value="UniProtKB"/>
</dbReference>
<dbReference type="GO" id="GO:0001228">
    <property type="term" value="F:DNA-binding transcription activator activity, RNA polymerase II-specific"/>
    <property type="evidence" value="ECO:0000250"/>
    <property type="project" value="UniProtKB"/>
</dbReference>
<dbReference type="GO" id="GO:0000978">
    <property type="term" value="F:RNA polymerase II cis-regulatory region sequence-specific DNA binding"/>
    <property type="evidence" value="ECO:0007669"/>
    <property type="project" value="TreeGrafter"/>
</dbReference>
<dbReference type="GO" id="GO:0030154">
    <property type="term" value="P:cell differentiation"/>
    <property type="evidence" value="ECO:0007669"/>
    <property type="project" value="TreeGrafter"/>
</dbReference>
<dbReference type="CDD" id="cd00086">
    <property type="entry name" value="homeodomain"/>
    <property type="match status" value="1"/>
</dbReference>
<dbReference type="FunFam" id="1.10.10.60:FF:000101">
    <property type="entry name" value="NK2 homeobox 8"/>
    <property type="match status" value="1"/>
</dbReference>
<dbReference type="Gene3D" id="1.10.10.60">
    <property type="entry name" value="Homeodomain-like"/>
    <property type="match status" value="1"/>
</dbReference>
<dbReference type="InterPro" id="IPR001356">
    <property type="entry name" value="HD"/>
</dbReference>
<dbReference type="InterPro" id="IPR020479">
    <property type="entry name" value="HD_metazoa"/>
</dbReference>
<dbReference type="InterPro" id="IPR017970">
    <property type="entry name" value="Homeobox_CS"/>
</dbReference>
<dbReference type="InterPro" id="IPR050394">
    <property type="entry name" value="Homeobox_NK-like"/>
</dbReference>
<dbReference type="InterPro" id="IPR009057">
    <property type="entry name" value="Homeodomain-like_sf"/>
</dbReference>
<dbReference type="PANTHER" id="PTHR24340">
    <property type="entry name" value="HOMEOBOX PROTEIN NKX"/>
    <property type="match status" value="1"/>
</dbReference>
<dbReference type="PANTHER" id="PTHR24340:SF24">
    <property type="entry name" value="HOMEOBOX PROTEIN NKX-2.2"/>
    <property type="match status" value="1"/>
</dbReference>
<dbReference type="Pfam" id="PF00046">
    <property type="entry name" value="Homeodomain"/>
    <property type="match status" value="1"/>
</dbReference>
<dbReference type="PRINTS" id="PR00024">
    <property type="entry name" value="HOMEOBOX"/>
</dbReference>
<dbReference type="SMART" id="SM00389">
    <property type="entry name" value="HOX"/>
    <property type="match status" value="1"/>
</dbReference>
<dbReference type="SUPFAM" id="SSF46689">
    <property type="entry name" value="Homeodomain-like"/>
    <property type="match status" value="1"/>
</dbReference>
<dbReference type="PROSITE" id="PS00027">
    <property type="entry name" value="HOMEOBOX_1"/>
    <property type="match status" value="1"/>
</dbReference>
<dbReference type="PROSITE" id="PS50071">
    <property type="entry name" value="HOMEOBOX_2"/>
    <property type="match status" value="1"/>
</dbReference>
<organism>
    <name type="scientific">Mesocricetus auratus</name>
    <name type="common">Golden hamster</name>
    <dbReference type="NCBI Taxonomy" id="10036"/>
    <lineage>
        <taxon>Eukaryota</taxon>
        <taxon>Metazoa</taxon>
        <taxon>Chordata</taxon>
        <taxon>Craniata</taxon>
        <taxon>Vertebrata</taxon>
        <taxon>Euteleostomi</taxon>
        <taxon>Mammalia</taxon>
        <taxon>Eutheria</taxon>
        <taxon>Euarchontoglires</taxon>
        <taxon>Glires</taxon>
        <taxon>Rodentia</taxon>
        <taxon>Myomorpha</taxon>
        <taxon>Muroidea</taxon>
        <taxon>Cricetidae</taxon>
        <taxon>Cricetinae</taxon>
        <taxon>Mesocricetus</taxon>
    </lineage>
</organism>
<accession>P43697</accession>
<sequence length="273" mass="30065">MSLTNTKTGFSVKDILDLPDTNDEEGSVAEGPEEESEGPEPAKRAGPLGQGALDAVHSLPLKSPFYDSSDNPYTRWLASTEGLQYSLHGLAASAPPQDSSSKSPEPSADESPDNDKETPGGGGDAGKKRKRRVLFSKAQTYELERRFRQQRYLSAPEREHLASLIRLTPTQVKIWFQNHRYKMKRARAEKGMEVTPLPSPRCVAVPVLVRDGKPCHALKAQDLAAATFQAGIPFSAYSAQSLQHMQYNAQYSSASTPQYPTAHPLVQAQQWTW</sequence>
<gene>
    <name type="primary">NKX2-2</name>
    <name type="synonym">NKX-2.2</name>
    <name type="synonym">NKX2B</name>
</gene>
<proteinExistence type="evidence at transcript level"/>